<organism>
    <name type="scientific">Shewanella baltica (strain OS185)</name>
    <dbReference type="NCBI Taxonomy" id="402882"/>
    <lineage>
        <taxon>Bacteria</taxon>
        <taxon>Pseudomonadati</taxon>
        <taxon>Pseudomonadota</taxon>
        <taxon>Gammaproteobacteria</taxon>
        <taxon>Alteromonadales</taxon>
        <taxon>Shewanellaceae</taxon>
        <taxon>Shewanella</taxon>
    </lineage>
</organism>
<name>PYRH_SHEB8</name>
<comment type="function">
    <text evidence="1">Catalyzes the reversible phosphorylation of UMP to UDP.</text>
</comment>
<comment type="catalytic activity">
    <reaction evidence="1">
        <text>UMP + ATP = UDP + ADP</text>
        <dbReference type="Rhea" id="RHEA:24400"/>
        <dbReference type="ChEBI" id="CHEBI:30616"/>
        <dbReference type="ChEBI" id="CHEBI:57865"/>
        <dbReference type="ChEBI" id="CHEBI:58223"/>
        <dbReference type="ChEBI" id="CHEBI:456216"/>
        <dbReference type="EC" id="2.7.4.22"/>
    </reaction>
</comment>
<comment type="activity regulation">
    <text evidence="1">Allosterically activated by GTP. Inhibited by UTP.</text>
</comment>
<comment type="pathway">
    <text evidence="1">Pyrimidine metabolism; CTP biosynthesis via de novo pathway; UDP from UMP (UMPK route): step 1/1.</text>
</comment>
<comment type="subunit">
    <text evidence="1">Homohexamer.</text>
</comment>
<comment type="subcellular location">
    <subcellularLocation>
        <location evidence="1">Cytoplasm</location>
    </subcellularLocation>
</comment>
<comment type="similarity">
    <text evidence="1">Belongs to the UMP kinase family.</text>
</comment>
<accession>A6WLA8</accession>
<sequence length="245" mass="26601">MSTNPKPAFRRILLKLSGEALMGDEGFGIDPKVLDRMAQEVKELVELGIQVGVVIGGGNLFRGEGLAKAGMNRVVGDHMGMLATVMNGLAMRDALHRAYVNARLMSAIPLKGVCDDYNWAEAISLLKSGRVVIFAAGTGNPFCTTDSAACLRGIEIEAEVVLKGTKVDGVYSEDPMKNPDAVKYDEVTYAEILEKELKVMDLAAFTMARDHDMPILVFNMNKPGALRRVIMGEEEGTLIRAKKVI</sequence>
<feature type="chain" id="PRO_1000054006" description="Uridylate kinase">
    <location>
        <begin position="1"/>
        <end position="245"/>
    </location>
</feature>
<feature type="region of interest" description="Involved in allosteric activation by GTP" evidence="1">
    <location>
        <begin position="23"/>
        <end position="28"/>
    </location>
</feature>
<feature type="binding site" evidence="1">
    <location>
        <begin position="15"/>
        <end position="18"/>
    </location>
    <ligand>
        <name>ATP</name>
        <dbReference type="ChEBI" id="CHEBI:30616"/>
    </ligand>
</feature>
<feature type="binding site" evidence="1">
    <location>
        <position position="57"/>
    </location>
    <ligand>
        <name>UMP</name>
        <dbReference type="ChEBI" id="CHEBI:57865"/>
    </ligand>
</feature>
<feature type="binding site" evidence="1">
    <location>
        <position position="58"/>
    </location>
    <ligand>
        <name>ATP</name>
        <dbReference type="ChEBI" id="CHEBI:30616"/>
    </ligand>
</feature>
<feature type="binding site" evidence="1">
    <location>
        <position position="62"/>
    </location>
    <ligand>
        <name>ATP</name>
        <dbReference type="ChEBI" id="CHEBI:30616"/>
    </ligand>
</feature>
<feature type="binding site" evidence="1">
    <location>
        <position position="77"/>
    </location>
    <ligand>
        <name>UMP</name>
        <dbReference type="ChEBI" id="CHEBI:57865"/>
    </ligand>
</feature>
<feature type="binding site" evidence="1">
    <location>
        <begin position="138"/>
        <end position="145"/>
    </location>
    <ligand>
        <name>UMP</name>
        <dbReference type="ChEBI" id="CHEBI:57865"/>
    </ligand>
</feature>
<feature type="binding site" evidence="1">
    <location>
        <position position="165"/>
    </location>
    <ligand>
        <name>ATP</name>
        <dbReference type="ChEBI" id="CHEBI:30616"/>
    </ligand>
</feature>
<feature type="binding site" evidence="1">
    <location>
        <position position="171"/>
    </location>
    <ligand>
        <name>ATP</name>
        <dbReference type="ChEBI" id="CHEBI:30616"/>
    </ligand>
</feature>
<feature type="binding site" evidence="1">
    <location>
        <position position="174"/>
    </location>
    <ligand>
        <name>ATP</name>
        <dbReference type="ChEBI" id="CHEBI:30616"/>
    </ligand>
</feature>
<proteinExistence type="inferred from homology"/>
<reference key="1">
    <citation type="submission" date="2007-07" db="EMBL/GenBank/DDBJ databases">
        <title>Complete sequence of chromosome of Shewanella baltica OS185.</title>
        <authorList>
            <consortium name="US DOE Joint Genome Institute"/>
            <person name="Copeland A."/>
            <person name="Lucas S."/>
            <person name="Lapidus A."/>
            <person name="Barry K."/>
            <person name="Glavina del Rio T."/>
            <person name="Dalin E."/>
            <person name="Tice H."/>
            <person name="Pitluck S."/>
            <person name="Sims D."/>
            <person name="Brettin T."/>
            <person name="Bruce D."/>
            <person name="Detter J.C."/>
            <person name="Han C."/>
            <person name="Schmutz J."/>
            <person name="Larimer F."/>
            <person name="Land M."/>
            <person name="Hauser L."/>
            <person name="Kyrpides N."/>
            <person name="Mikhailova N."/>
            <person name="Brettar I."/>
            <person name="Rodrigues J."/>
            <person name="Konstantinidis K."/>
            <person name="Tiedje J."/>
            <person name="Richardson P."/>
        </authorList>
    </citation>
    <scope>NUCLEOTIDE SEQUENCE [LARGE SCALE GENOMIC DNA]</scope>
    <source>
        <strain>OS185</strain>
    </source>
</reference>
<gene>
    <name evidence="1" type="primary">pyrH</name>
    <name type="ordered locus">Shew185_1447</name>
</gene>
<evidence type="ECO:0000255" key="1">
    <source>
        <dbReference type="HAMAP-Rule" id="MF_01220"/>
    </source>
</evidence>
<dbReference type="EC" id="2.7.4.22" evidence="1"/>
<dbReference type="EMBL" id="CP000753">
    <property type="protein sequence ID" value="ABS07597.1"/>
    <property type="molecule type" value="Genomic_DNA"/>
</dbReference>
<dbReference type="RefSeq" id="WP_006080981.1">
    <property type="nucleotide sequence ID" value="NC_009665.1"/>
</dbReference>
<dbReference type="SMR" id="A6WLA8"/>
<dbReference type="GeneID" id="11771732"/>
<dbReference type="KEGG" id="sbm:Shew185_1447"/>
<dbReference type="HOGENOM" id="CLU_033861_0_0_6"/>
<dbReference type="UniPathway" id="UPA00159">
    <property type="reaction ID" value="UER00275"/>
</dbReference>
<dbReference type="GO" id="GO:0005829">
    <property type="term" value="C:cytosol"/>
    <property type="evidence" value="ECO:0007669"/>
    <property type="project" value="TreeGrafter"/>
</dbReference>
<dbReference type="GO" id="GO:0005524">
    <property type="term" value="F:ATP binding"/>
    <property type="evidence" value="ECO:0007669"/>
    <property type="project" value="UniProtKB-KW"/>
</dbReference>
<dbReference type="GO" id="GO:0033862">
    <property type="term" value="F:UMP kinase activity"/>
    <property type="evidence" value="ECO:0007669"/>
    <property type="project" value="UniProtKB-EC"/>
</dbReference>
<dbReference type="GO" id="GO:0044210">
    <property type="term" value="P:'de novo' CTP biosynthetic process"/>
    <property type="evidence" value="ECO:0007669"/>
    <property type="project" value="UniProtKB-UniRule"/>
</dbReference>
<dbReference type="GO" id="GO:0006225">
    <property type="term" value="P:UDP biosynthetic process"/>
    <property type="evidence" value="ECO:0007669"/>
    <property type="project" value="TreeGrafter"/>
</dbReference>
<dbReference type="CDD" id="cd04254">
    <property type="entry name" value="AAK_UMPK-PyrH-Ec"/>
    <property type="match status" value="1"/>
</dbReference>
<dbReference type="FunFam" id="3.40.1160.10:FF:000001">
    <property type="entry name" value="Uridylate kinase"/>
    <property type="match status" value="1"/>
</dbReference>
<dbReference type="Gene3D" id="3.40.1160.10">
    <property type="entry name" value="Acetylglutamate kinase-like"/>
    <property type="match status" value="1"/>
</dbReference>
<dbReference type="HAMAP" id="MF_01220_B">
    <property type="entry name" value="PyrH_B"/>
    <property type="match status" value="1"/>
</dbReference>
<dbReference type="InterPro" id="IPR036393">
    <property type="entry name" value="AceGlu_kinase-like_sf"/>
</dbReference>
<dbReference type="InterPro" id="IPR001048">
    <property type="entry name" value="Asp/Glu/Uridylate_kinase"/>
</dbReference>
<dbReference type="InterPro" id="IPR011817">
    <property type="entry name" value="Uridylate_kinase"/>
</dbReference>
<dbReference type="InterPro" id="IPR015963">
    <property type="entry name" value="Uridylate_kinase_bac"/>
</dbReference>
<dbReference type="NCBIfam" id="TIGR02075">
    <property type="entry name" value="pyrH_bact"/>
    <property type="match status" value="1"/>
</dbReference>
<dbReference type="PANTHER" id="PTHR42833">
    <property type="entry name" value="URIDYLATE KINASE"/>
    <property type="match status" value="1"/>
</dbReference>
<dbReference type="PANTHER" id="PTHR42833:SF4">
    <property type="entry name" value="URIDYLATE KINASE PUMPKIN, CHLOROPLASTIC"/>
    <property type="match status" value="1"/>
</dbReference>
<dbReference type="Pfam" id="PF00696">
    <property type="entry name" value="AA_kinase"/>
    <property type="match status" value="1"/>
</dbReference>
<dbReference type="PIRSF" id="PIRSF005650">
    <property type="entry name" value="Uridylate_kin"/>
    <property type="match status" value="1"/>
</dbReference>
<dbReference type="SUPFAM" id="SSF53633">
    <property type="entry name" value="Carbamate kinase-like"/>
    <property type="match status" value="1"/>
</dbReference>
<keyword id="KW-0021">Allosteric enzyme</keyword>
<keyword id="KW-0067">ATP-binding</keyword>
<keyword id="KW-0963">Cytoplasm</keyword>
<keyword id="KW-0418">Kinase</keyword>
<keyword id="KW-0547">Nucleotide-binding</keyword>
<keyword id="KW-0665">Pyrimidine biosynthesis</keyword>
<keyword id="KW-0808">Transferase</keyword>
<protein>
    <recommendedName>
        <fullName evidence="1">Uridylate kinase</fullName>
        <shortName evidence="1">UK</shortName>
        <ecNumber evidence="1">2.7.4.22</ecNumber>
    </recommendedName>
    <alternativeName>
        <fullName evidence="1">Uridine monophosphate kinase</fullName>
        <shortName evidence="1">UMP kinase</shortName>
        <shortName evidence="1">UMPK</shortName>
    </alternativeName>
</protein>